<proteinExistence type="evidence at protein level"/>
<feature type="chain" id="PRO_0000133966" description="Enolase">
    <location>
        <begin position="1"/>
        <end position="434"/>
    </location>
</feature>
<feature type="active site" description="Proton donor" evidence="1">
    <location>
        <position position="207"/>
    </location>
</feature>
<feature type="active site" description="Proton acceptor" evidence="1">
    <location>
        <position position="343"/>
    </location>
</feature>
<feature type="binding site" evidence="1">
    <location>
        <position position="165"/>
    </location>
    <ligand>
        <name>(2R)-2-phosphoglycerate</name>
        <dbReference type="ChEBI" id="CHEBI:58289"/>
    </ligand>
</feature>
<feature type="binding site" evidence="1">
    <location>
        <position position="244"/>
    </location>
    <ligand>
        <name>Mg(2+)</name>
        <dbReference type="ChEBI" id="CHEBI:18420"/>
    </ligand>
</feature>
<feature type="binding site" evidence="1">
    <location>
        <position position="291"/>
    </location>
    <ligand>
        <name>Mg(2+)</name>
        <dbReference type="ChEBI" id="CHEBI:18420"/>
    </ligand>
</feature>
<feature type="binding site" evidence="1">
    <location>
        <position position="318"/>
    </location>
    <ligand>
        <name>Mg(2+)</name>
        <dbReference type="ChEBI" id="CHEBI:18420"/>
    </ligand>
</feature>
<feature type="binding site" evidence="1">
    <location>
        <position position="343"/>
    </location>
    <ligand>
        <name>(2R)-2-phosphoglycerate</name>
        <dbReference type="ChEBI" id="CHEBI:58289"/>
    </ligand>
</feature>
<feature type="binding site" evidence="1">
    <location>
        <position position="372"/>
    </location>
    <ligand>
        <name>(2R)-2-phosphoglycerate</name>
        <dbReference type="ChEBI" id="CHEBI:58289"/>
    </ligand>
</feature>
<feature type="binding site" evidence="1">
    <location>
        <position position="373"/>
    </location>
    <ligand>
        <name>(2R)-2-phosphoglycerate</name>
        <dbReference type="ChEBI" id="CHEBI:58289"/>
    </ligand>
</feature>
<feature type="binding site" evidence="1">
    <location>
        <position position="394"/>
    </location>
    <ligand>
        <name>(2R)-2-phosphoglycerate</name>
        <dbReference type="ChEBI" id="CHEBI:58289"/>
    </ligand>
</feature>
<name>ENO_STAAN</name>
<gene>
    <name evidence="1" type="primary">eno</name>
    <name type="ordered locus">SA0731</name>
</gene>
<protein>
    <recommendedName>
        <fullName evidence="1">Enolase</fullName>
        <ecNumber evidence="1">4.2.1.11</ecNumber>
    </recommendedName>
    <alternativeName>
        <fullName evidence="1">2-phospho-D-glycerate hydro-lyase</fullName>
    </alternativeName>
    <alternativeName>
        <fullName evidence="1">2-phosphoglycerate dehydratase</fullName>
    </alternativeName>
</protein>
<keyword id="KW-0963">Cytoplasm</keyword>
<keyword id="KW-0324">Glycolysis</keyword>
<keyword id="KW-0456">Lyase</keyword>
<keyword id="KW-0460">Magnesium</keyword>
<keyword id="KW-0479">Metal-binding</keyword>
<keyword id="KW-0964">Secreted</keyword>
<keyword id="KW-0843">Virulence</keyword>
<evidence type="ECO:0000255" key="1">
    <source>
        <dbReference type="HAMAP-Rule" id="MF_00318"/>
    </source>
</evidence>
<comment type="function">
    <text evidence="1">Catalyzes the reversible conversion of 2-phosphoglycerate (2-PG) into phosphoenolpyruvate (PEP). It is essential for the degradation of carbohydrates via glycolysis.</text>
</comment>
<comment type="catalytic activity">
    <reaction evidence="1">
        <text>(2R)-2-phosphoglycerate = phosphoenolpyruvate + H2O</text>
        <dbReference type="Rhea" id="RHEA:10164"/>
        <dbReference type="ChEBI" id="CHEBI:15377"/>
        <dbReference type="ChEBI" id="CHEBI:58289"/>
        <dbReference type="ChEBI" id="CHEBI:58702"/>
        <dbReference type="EC" id="4.2.1.11"/>
    </reaction>
</comment>
<comment type="cofactor">
    <cofactor evidence="1">
        <name>Mg(2+)</name>
        <dbReference type="ChEBI" id="CHEBI:18420"/>
    </cofactor>
    <text evidence="1">Binds a second Mg(2+) ion via substrate during catalysis.</text>
</comment>
<comment type="pathway">
    <text evidence="1">Carbohydrate degradation; glycolysis; pyruvate from D-glyceraldehyde 3-phosphate: step 4/5.</text>
</comment>
<comment type="subcellular location">
    <subcellularLocation>
        <location evidence="1">Cytoplasm</location>
    </subcellularLocation>
    <subcellularLocation>
        <location evidence="1">Secreted</location>
    </subcellularLocation>
    <subcellularLocation>
        <location evidence="1">Cell surface</location>
    </subcellularLocation>
    <text evidence="1">Fractions of enolase are present in both the cytoplasm and on the cell surface.</text>
</comment>
<comment type="similarity">
    <text evidence="1">Belongs to the enolase family.</text>
</comment>
<sequence>MPIITDVYAREVLDSRGNPTVEVEVLTESGAFGRALVPSGASTGEHEAVELRDGDKSRYLGKGVTKAVENVNEIIAPEIIEGEFSVLDQVSIDKMMIALDGTPNKGKLGANAILGVSIAVARAAADLLGQPLYKYLGGFNGKQLPVPMMNIVNGGSHSDAPIAFQEFMILPVGATTFKESLRWGTEIFHNLKSILSKRGLETAVGDEGGFAPKFEGTEDAVETIIQAIEAAGYKPGEEVFLGFDCASSEFYENGVYDYSKFEGEHGAKRTAAEQVDYLEQLVDKYPIITIEDGMDENDWDGWKQLTERIGDRVQLVGDDLFVTNTEILAKGIENGIGNSILIKVNQIGTLTETFDAIEMAQKAGYTAVVSHRSGETEDTTIADIAVATNAGQIKTGSLSRTDRIAKYNQLLRIEDELFETAKYDGIKSFYNLDK</sequence>
<reference key="1">
    <citation type="journal article" date="2001" name="Lancet">
        <title>Whole genome sequencing of meticillin-resistant Staphylococcus aureus.</title>
        <authorList>
            <person name="Kuroda M."/>
            <person name="Ohta T."/>
            <person name="Uchiyama I."/>
            <person name="Baba T."/>
            <person name="Yuzawa H."/>
            <person name="Kobayashi I."/>
            <person name="Cui L."/>
            <person name="Oguchi A."/>
            <person name="Aoki K."/>
            <person name="Nagai Y."/>
            <person name="Lian J.-Q."/>
            <person name="Ito T."/>
            <person name="Kanamori M."/>
            <person name="Matsumaru H."/>
            <person name="Maruyama A."/>
            <person name="Murakami H."/>
            <person name="Hosoyama A."/>
            <person name="Mizutani-Ui Y."/>
            <person name="Takahashi N.K."/>
            <person name="Sawano T."/>
            <person name="Inoue R."/>
            <person name="Kaito C."/>
            <person name="Sekimizu K."/>
            <person name="Hirakawa H."/>
            <person name="Kuhara S."/>
            <person name="Goto S."/>
            <person name="Yabuzaki J."/>
            <person name="Kanehisa M."/>
            <person name="Yamashita A."/>
            <person name="Oshima K."/>
            <person name="Furuya K."/>
            <person name="Yoshino C."/>
            <person name="Shiba T."/>
            <person name="Hattori M."/>
            <person name="Ogasawara N."/>
            <person name="Hayashi H."/>
            <person name="Hiramatsu K."/>
        </authorList>
    </citation>
    <scope>NUCLEOTIDE SEQUENCE [LARGE SCALE GENOMIC DNA]</scope>
    <source>
        <strain>N315</strain>
    </source>
</reference>
<reference key="2">
    <citation type="journal article" date="2005" name="J. Microbiol. Methods">
        <title>Correlation of proteomic and transcriptomic profiles of Staphylococcus aureus during the post-exponential phase of growth.</title>
        <authorList>
            <person name="Scherl A."/>
            <person name="Francois P."/>
            <person name="Bento M."/>
            <person name="Deshusses J.M."/>
            <person name="Charbonnier Y."/>
            <person name="Converset V."/>
            <person name="Huyghe A."/>
            <person name="Walter N."/>
            <person name="Hoogland C."/>
            <person name="Appel R.D."/>
            <person name="Sanchez J.-C."/>
            <person name="Zimmermann-Ivol C.G."/>
            <person name="Corthals G.L."/>
            <person name="Hochstrasser D.F."/>
            <person name="Schrenzel J."/>
        </authorList>
    </citation>
    <scope>IDENTIFICATION BY MASS SPECTROMETRY</scope>
    <source>
        <strain>N315</strain>
    </source>
</reference>
<reference key="3">
    <citation type="submission" date="2007-10" db="UniProtKB">
        <title>Shotgun proteomic analysis of total and membrane protein extracts of S. aureus strain N315.</title>
        <authorList>
            <person name="Vaezzadeh A.R."/>
            <person name="Deshusses J."/>
            <person name="Lescuyer P."/>
            <person name="Hochstrasser D.F."/>
        </authorList>
    </citation>
    <scope>IDENTIFICATION BY MASS SPECTROMETRY [LARGE SCALE ANALYSIS]</scope>
    <source>
        <strain>N315</strain>
    </source>
</reference>
<organism>
    <name type="scientific">Staphylococcus aureus (strain N315)</name>
    <dbReference type="NCBI Taxonomy" id="158879"/>
    <lineage>
        <taxon>Bacteria</taxon>
        <taxon>Bacillati</taxon>
        <taxon>Bacillota</taxon>
        <taxon>Bacilli</taxon>
        <taxon>Bacillales</taxon>
        <taxon>Staphylococcaceae</taxon>
        <taxon>Staphylococcus</taxon>
    </lineage>
</organism>
<dbReference type="EC" id="4.2.1.11" evidence="1"/>
<dbReference type="EMBL" id="BA000018">
    <property type="protein sequence ID" value="BAB41964.1"/>
    <property type="molecule type" value="Genomic_DNA"/>
</dbReference>
<dbReference type="PIR" id="A89851">
    <property type="entry name" value="A89851"/>
</dbReference>
<dbReference type="RefSeq" id="WP_001121760.1">
    <property type="nucleotide sequence ID" value="NC_002745.2"/>
</dbReference>
<dbReference type="SMR" id="P99088"/>
<dbReference type="EnsemblBacteria" id="BAB41964">
    <property type="protein sequence ID" value="BAB41964"/>
    <property type="gene ID" value="BAB41964"/>
</dbReference>
<dbReference type="KEGG" id="sau:SA0731"/>
<dbReference type="HOGENOM" id="CLU_031223_2_1_9"/>
<dbReference type="UniPathway" id="UPA00109">
    <property type="reaction ID" value="UER00187"/>
</dbReference>
<dbReference type="GO" id="GO:0009986">
    <property type="term" value="C:cell surface"/>
    <property type="evidence" value="ECO:0007669"/>
    <property type="project" value="UniProtKB-SubCell"/>
</dbReference>
<dbReference type="GO" id="GO:0005576">
    <property type="term" value="C:extracellular region"/>
    <property type="evidence" value="ECO:0007669"/>
    <property type="project" value="UniProtKB-SubCell"/>
</dbReference>
<dbReference type="GO" id="GO:0000015">
    <property type="term" value="C:phosphopyruvate hydratase complex"/>
    <property type="evidence" value="ECO:0007669"/>
    <property type="project" value="InterPro"/>
</dbReference>
<dbReference type="GO" id="GO:0000287">
    <property type="term" value="F:magnesium ion binding"/>
    <property type="evidence" value="ECO:0007669"/>
    <property type="project" value="UniProtKB-UniRule"/>
</dbReference>
<dbReference type="GO" id="GO:0004634">
    <property type="term" value="F:phosphopyruvate hydratase activity"/>
    <property type="evidence" value="ECO:0007669"/>
    <property type="project" value="UniProtKB-UniRule"/>
</dbReference>
<dbReference type="GO" id="GO:0006096">
    <property type="term" value="P:glycolytic process"/>
    <property type="evidence" value="ECO:0007669"/>
    <property type="project" value="UniProtKB-UniRule"/>
</dbReference>
<dbReference type="CDD" id="cd03313">
    <property type="entry name" value="enolase"/>
    <property type="match status" value="1"/>
</dbReference>
<dbReference type="FunFam" id="3.20.20.120:FF:000001">
    <property type="entry name" value="Enolase"/>
    <property type="match status" value="1"/>
</dbReference>
<dbReference type="FunFam" id="3.30.390.10:FF:000001">
    <property type="entry name" value="Enolase"/>
    <property type="match status" value="1"/>
</dbReference>
<dbReference type="Gene3D" id="3.20.20.120">
    <property type="entry name" value="Enolase-like C-terminal domain"/>
    <property type="match status" value="1"/>
</dbReference>
<dbReference type="Gene3D" id="3.30.390.10">
    <property type="entry name" value="Enolase-like, N-terminal domain"/>
    <property type="match status" value="1"/>
</dbReference>
<dbReference type="HAMAP" id="MF_00318">
    <property type="entry name" value="Enolase"/>
    <property type="match status" value="1"/>
</dbReference>
<dbReference type="InterPro" id="IPR000941">
    <property type="entry name" value="Enolase"/>
</dbReference>
<dbReference type="InterPro" id="IPR036849">
    <property type="entry name" value="Enolase-like_C_sf"/>
</dbReference>
<dbReference type="InterPro" id="IPR029017">
    <property type="entry name" value="Enolase-like_N"/>
</dbReference>
<dbReference type="InterPro" id="IPR020810">
    <property type="entry name" value="Enolase_C"/>
</dbReference>
<dbReference type="InterPro" id="IPR020809">
    <property type="entry name" value="Enolase_CS"/>
</dbReference>
<dbReference type="InterPro" id="IPR020811">
    <property type="entry name" value="Enolase_N"/>
</dbReference>
<dbReference type="NCBIfam" id="TIGR01060">
    <property type="entry name" value="eno"/>
    <property type="match status" value="1"/>
</dbReference>
<dbReference type="PANTHER" id="PTHR11902">
    <property type="entry name" value="ENOLASE"/>
    <property type="match status" value="1"/>
</dbReference>
<dbReference type="PANTHER" id="PTHR11902:SF1">
    <property type="entry name" value="ENOLASE"/>
    <property type="match status" value="1"/>
</dbReference>
<dbReference type="Pfam" id="PF00113">
    <property type="entry name" value="Enolase_C"/>
    <property type="match status" value="1"/>
</dbReference>
<dbReference type="Pfam" id="PF03952">
    <property type="entry name" value="Enolase_N"/>
    <property type="match status" value="1"/>
</dbReference>
<dbReference type="PIRSF" id="PIRSF001400">
    <property type="entry name" value="Enolase"/>
    <property type="match status" value="1"/>
</dbReference>
<dbReference type="PRINTS" id="PR00148">
    <property type="entry name" value="ENOLASE"/>
</dbReference>
<dbReference type="SFLD" id="SFLDF00002">
    <property type="entry name" value="enolase"/>
    <property type="match status" value="1"/>
</dbReference>
<dbReference type="SFLD" id="SFLDG00178">
    <property type="entry name" value="enolase"/>
    <property type="match status" value="1"/>
</dbReference>
<dbReference type="SMART" id="SM01192">
    <property type="entry name" value="Enolase_C"/>
    <property type="match status" value="1"/>
</dbReference>
<dbReference type="SMART" id="SM01193">
    <property type="entry name" value="Enolase_N"/>
    <property type="match status" value="1"/>
</dbReference>
<dbReference type="SUPFAM" id="SSF51604">
    <property type="entry name" value="Enolase C-terminal domain-like"/>
    <property type="match status" value="1"/>
</dbReference>
<dbReference type="SUPFAM" id="SSF54826">
    <property type="entry name" value="Enolase N-terminal domain-like"/>
    <property type="match status" value="1"/>
</dbReference>
<dbReference type="PROSITE" id="PS00164">
    <property type="entry name" value="ENOLASE"/>
    <property type="match status" value="1"/>
</dbReference>
<accession>P99088</accession>
<accession>Q99VK5</accession>